<comment type="function">
    <text evidence="1">Produces ATP from ADP in the presence of a proton gradient across the membrane. The catalytic sites are hosted primarily by the beta subunits.</text>
</comment>
<comment type="catalytic activity">
    <reaction evidence="1">
        <text>ATP + H2O + 4 H(+)(in) = ADP + phosphate + 5 H(+)(out)</text>
        <dbReference type="Rhea" id="RHEA:57720"/>
        <dbReference type="ChEBI" id="CHEBI:15377"/>
        <dbReference type="ChEBI" id="CHEBI:15378"/>
        <dbReference type="ChEBI" id="CHEBI:30616"/>
        <dbReference type="ChEBI" id="CHEBI:43474"/>
        <dbReference type="ChEBI" id="CHEBI:456216"/>
        <dbReference type="EC" id="7.1.2.2"/>
    </reaction>
</comment>
<comment type="subunit">
    <text evidence="1">F-type ATPases have 2 components, CF(1) - the catalytic core - and CF(0) - the membrane proton channel. CF(1) has five subunits: alpha(3), beta(3), gamma(1), delta(1), epsilon(1). CF(0) has three main subunits: a(1), b(2) and c(9-12). The alpha and beta chains form an alternating ring which encloses part of the gamma chain. CF(1) is attached to CF(0) by a central stalk formed by the gamma and epsilon chains, while a peripheral stalk is formed by the delta and b chains.</text>
</comment>
<comment type="subcellular location">
    <subcellularLocation>
        <location evidence="1">Cell inner membrane</location>
        <topology evidence="1">Peripheral membrane protein</topology>
    </subcellularLocation>
</comment>
<comment type="similarity">
    <text evidence="1">Belongs to the ATPase alpha/beta chains family.</text>
</comment>
<reference key="1">
    <citation type="journal article" date="2006" name="PLoS Genet.">
        <title>Comparative genomics of emerging human ehrlichiosis agents.</title>
        <authorList>
            <person name="Dunning Hotopp J.C."/>
            <person name="Lin M."/>
            <person name="Madupu R."/>
            <person name="Crabtree J."/>
            <person name="Angiuoli S.V."/>
            <person name="Eisen J.A."/>
            <person name="Seshadri R."/>
            <person name="Ren Q."/>
            <person name="Wu M."/>
            <person name="Utterback T.R."/>
            <person name="Smith S."/>
            <person name="Lewis M."/>
            <person name="Khouri H."/>
            <person name="Zhang C."/>
            <person name="Niu H."/>
            <person name="Lin Q."/>
            <person name="Ohashi N."/>
            <person name="Zhi N."/>
            <person name="Nelson W.C."/>
            <person name="Brinkac L.M."/>
            <person name="Dodson R.J."/>
            <person name="Rosovitz M.J."/>
            <person name="Sundaram J.P."/>
            <person name="Daugherty S.C."/>
            <person name="Davidsen T."/>
            <person name="Durkin A.S."/>
            <person name="Gwinn M.L."/>
            <person name="Haft D.H."/>
            <person name="Selengut J.D."/>
            <person name="Sullivan S.A."/>
            <person name="Zafar N."/>
            <person name="Zhou L."/>
            <person name="Benahmed F."/>
            <person name="Forberger H."/>
            <person name="Halpin R."/>
            <person name="Mulligan S."/>
            <person name="Robinson J."/>
            <person name="White O."/>
            <person name="Rikihisa Y."/>
            <person name="Tettelin H."/>
        </authorList>
    </citation>
    <scope>NUCLEOTIDE SEQUENCE [LARGE SCALE GENOMIC DNA]</scope>
    <source>
        <strain>HZ</strain>
    </source>
</reference>
<sequence length="479" mass="51511">MNQDSGCEGVGEVVRVMPAVVDVEFAHGGLPDILHALKSEKDYQGKQLVLEVAQHLGDGVVRCVAMGSTDGLSRGDKFINTGSPISVPVGRKTLGRVFDVLGEPIDGVGDVGADVEYHSIHAHAPKLSEQKVATEVLVTGIKVIDLLAPYLKGGKVGLFGGAGVGKTVLIMELISNIARAHKGFSVFAGVGERTREGNDLYREMVESGVINEDEREKSQAVLVYGQMNEPPGARMRVALSALTMAEYFRDAEGQDVLFFVDNVFRFTQSGSEVSALLGRVPSAVGYQPTLASEMGAMQERITSTHKGSITSVQAIYVPADDLTDPAPSTSFLHLDSTTVLSRQISELGIYPAVDPLDSTSQALSVDVVGAEHYEVAREVQRILQTYKSLQDIIAILGMDELSQEDKILVARARKIQRFLSQPFHVAEVFTGNPGVFVSLEDTVRSFKGLVEGQYDDLPEAAFYMVGGIDAAVEKAKALK</sequence>
<accession>Q2GKK8</accession>
<keyword id="KW-0066">ATP synthesis</keyword>
<keyword id="KW-0067">ATP-binding</keyword>
<keyword id="KW-0997">Cell inner membrane</keyword>
<keyword id="KW-1003">Cell membrane</keyword>
<keyword id="KW-0139">CF(1)</keyword>
<keyword id="KW-0375">Hydrogen ion transport</keyword>
<keyword id="KW-0406">Ion transport</keyword>
<keyword id="KW-0472">Membrane</keyword>
<keyword id="KW-0547">Nucleotide-binding</keyword>
<keyword id="KW-1278">Translocase</keyword>
<keyword id="KW-0813">Transport</keyword>
<protein>
    <recommendedName>
        <fullName evidence="1">ATP synthase subunit beta</fullName>
        <ecNumber evidence="1">7.1.2.2</ecNumber>
    </recommendedName>
    <alternativeName>
        <fullName evidence="1">ATP synthase F1 sector subunit beta</fullName>
    </alternativeName>
    <alternativeName>
        <fullName evidence="1">F-ATPase subunit beta</fullName>
    </alternativeName>
</protein>
<proteinExistence type="inferred from homology"/>
<name>ATPB_ANAPZ</name>
<dbReference type="EC" id="7.1.2.2" evidence="1"/>
<dbReference type="EMBL" id="CP000235">
    <property type="protein sequence ID" value="ABD44307.1"/>
    <property type="molecule type" value="Genomic_DNA"/>
</dbReference>
<dbReference type="SMR" id="Q2GKK8"/>
<dbReference type="STRING" id="212042.APH_0494"/>
<dbReference type="PaxDb" id="212042-APH_0494"/>
<dbReference type="EnsemblBacteria" id="ABD44307">
    <property type="protein sequence ID" value="ABD44307"/>
    <property type="gene ID" value="APH_0494"/>
</dbReference>
<dbReference type="KEGG" id="aph:APH_0494"/>
<dbReference type="eggNOG" id="COG0055">
    <property type="taxonomic scope" value="Bacteria"/>
</dbReference>
<dbReference type="HOGENOM" id="CLU_022398_0_2_5"/>
<dbReference type="Proteomes" id="UP000001943">
    <property type="component" value="Chromosome"/>
</dbReference>
<dbReference type="GO" id="GO:0005886">
    <property type="term" value="C:plasma membrane"/>
    <property type="evidence" value="ECO:0007669"/>
    <property type="project" value="UniProtKB-SubCell"/>
</dbReference>
<dbReference type="GO" id="GO:0045259">
    <property type="term" value="C:proton-transporting ATP synthase complex"/>
    <property type="evidence" value="ECO:0007669"/>
    <property type="project" value="UniProtKB-KW"/>
</dbReference>
<dbReference type="GO" id="GO:0005524">
    <property type="term" value="F:ATP binding"/>
    <property type="evidence" value="ECO:0007669"/>
    <property type="project" value="UniProtKB-UniRule"/>
</dbReference>
<dbReference type="GO" id="GO:0016887">
    <property type="term" value="F:ATP hydrolysis activity"/>
    <property type="evidence" value="ECO:0007669"/>
    <property type="project" value="InterPro"/>
</dbReference>
<dbReference type="GO" id="GO:0046933">
    <property type="term" value="F:proton-transporting ATP synthase activity, rotational mechanism"/>
    <property type="evidence" value="ECO:0007669"/>
    <property type="project" value="UniProtKB-UniRule"/>
</dbReference>
<dbReference type="CDD" id="cd18110">
    <property type="entry name" value="ATP-synt_F1_beta_C"/>
    <property type="match status" value="1"/>
</dbReference>
<dbReference type="CDD" id="cd18115">
    <property type="entry name" value="ATP-synt_F1_beta_N"/>
    <property type="match status" value="1"/>
</dbReference>
<dbReference type="CDD" id="cd01133">
    <property type="entry name" value="F1-ATPase_beta_CD"/>
    <property type="match status" value="1"/>
</dbReference>
<dbReference type="FunFam" id="1.10.1140.10:FF:000001">
    <property type="entry name" value="ATP synthase subunit beta"/>
    <property type="match status" value="1"/>
</dbReference>
<dbReference type="FunFam" id="3.40.50.300:FF:000026">
    <property type="entry name" value="ATP synthase subunit beta"/>
    <property type="match status" value="1"/>
</dbReference>
<dbReference type="Gene3D" id="2.40.10.170">
    <property type="match status" value="1"/>
</dbReference>
<dbReference type="Gene3D" id="1.10.1140.10">
    <property type="entry name" value="Bovine Mitochondrial F1-atpase, Atp Synthase Beta Chain, Chain D, domain 3"/>
    <property type="match status" value="1"/>
</dbReference>
<dbReference type="Gene3D" id="3.40.50.300">
    <property type="entry name" value="P-loop containing nucleotide triphosphate hydrolases"/>
    <property type="match status" value="1"/>
</dbReference>
<dbReference type="HAMAP" id="MF_01347">
    <property type="entry name" value="ATP_synth_beta_bact"/>
    <property type="match status" value="1"/>
</dbReference>
<dbReference type="InterPro" id="IPR003593">
    <property type="entry name" value="AAA+_ATPase"/>
</dbReference>
<dbReference type="InterPro" id="IPR055190">
    <property type="entry name" value="ATP-synt_VA_C"/>
</dbReference>
<dbReference type="InterPro" id="IPR005722">
    <property type="entry name" value="ATP_synth_F1_bsu"/>
</dbReference>
<dbReference type="InterPro" id="IPR020003">
    <property type="entry name" value="ATPase_a/bsu_AS"/>
</dbReference>
<dbReference type="InterPro" id="IPR050053">
    <property type="entry name" value="ATPase_alpha/beta_chains"/>
</dbReference>
<dbReference type="InterPro" id="IPR004100">
    <property type="entry name" value="ATPase_F1/V1/A1_a/bsu_N"/>
</dbReference>
<dbReference type="InterPro" id="IPR036121">
    <property type="entry name" value="ATPase_F1/V1/A1_a/bsu_N_sf"/>
</dbReference>
<dbReference type="InterPro" id="IPR000194">
    <property type="entry name" value="ATPase_F1/V1/A1_a/bsu_nucl-bd"/>
</dbReference>
<dbReference type="InterPro" id="IPR024034">
    <property type="entry name" value="ATPase_F1/V1_b/a_C"/>
</dbReference>
<dbReference type="InterPro" id="IPR027417">
    <property type="entry name" value="P-loop_NTPase"/>
</dbReference>
<dbReference type="NCBIfam" id="TIGR01039">
    <property type="entry name" value="atpD"/>
    <property type="match status" value="1"/>
</dbReference>
<dbReference type="PANTHER" id="PTHR15184">
    <property type="entry name" value="ATP SYNTHASE"/>
    <property type="match status" value="1"/>
</dbReference>
<dbReference type="PANTHER" id="PTHR15184:SF71">
    <property type="entry name" value="ATP SYNTHASE SUBUNIT BETA, MITOCHONDRIAL"/>
    <property type="match status" value="1"/>
</dbReference>
<dbReference type="Pfam" id="PF00006">
    <property type="entry name" value="ATP-synt_ab"/>
    <property type="match status" value="1"/>
</dbReference>
<dbReference type="Pfam" id="PF02874">
    <property type="entry name" value="ATP-synt_ab_N"/>
    <property type="match status" value="1"/>
</dbReference>
<dbReference type="Pfam" id="PF22919">
    <property type="entry name" value="ATP-synt_VA_C"/>
    <property type="match status" value="1"/>
</dbReference>
<dbReference type="SMART" id="SM00382">
    <property type="entry name" value="AAA"/>
    <property type="match status" value="1"/>
</dbReference>
<dbReference type="SUPFAM" id="SSF47917">
    <property type="entry name" value="C-terminal domain of alpha and beta subunits of F1 ATP synthase"/>
    <property type="match status" value="1"/>
</dbReference>
<dbReference type="SUPFAM" id="SSF50615">
    <property type="entry name" value="N-terminal domain of alpha and beta subunits of F1 ATP synthase"/>
    <property type="match status" value="1"/>
</dbReference>
<dbReference type="SUPFAM" id="SSF52540">
    <property type="entry name" value="P-loop containing nucleoside triphosphate hydrolases"/>
    <property type="match status" value="1"/>
</dbReference>
<dbReference type="PROSITE" id="PS00152">
    <property type="entry name" value="ATPASE_ALPHA_BETA"/>
    <property type="match status" value="1"/>
</dbReference>
<feature type="chain" id="PRO_0000254203" description="ATP synthase subunit beta">
    <location>
        <begin position="1"/>
        <end position="479"/>
    </location>
</feature>
<feature type="binding site" evidence="1">
    <location>
        <begin position="160"/>
        <end position="167"/>
    </location>
    <ligand>
        <name>ATP</name>
        <dbReference type="ChEBI" id="CHEBI:30616"/>
    </ligand>
</feature>
<organism>
    <name type="scientific">Anaplasma phagocytophilum (strain HZ)</name>
    <dbReference type="NCBI Taxonomy" id="212042"/>
    <lineage>
        <taxon>Bacteria</taxon>
        <taxon>Pseudomonadati</taxon>
        <taxon>Pseudomonadota</taxon>
        <taxon>Alphaproteobacteria</taxon>
        <taxon>Rickettsiales</taxon>
        <taxon>Anaplasmataceae</taxon>
        <taxon>Anaplasma</taxon>
        <taxon>phagocytophilum group</taxon>
    </lineage>
</organism>
<evidence type="ECO:0000255" key="1">
    <source>
        <dbReference type="HAMAP-Rule" id="MF_01347"/>
    </source>
</evidence>
<gene>
    <name evidence="1" type="primary">atpD</name>
    <name type="ordered locus">APH_0494</name>
</gene>